<evidence type="ECO:0000250" key="1"/>
<evidence type="ECO:0000255" key="2"/>
<evidence type="ECO:0000305" key="3"/>
<proteinExistence type="evidence at transcript level"/>
<comment type="function">
    <text evidence="1">Lethal neurotoxin. Selectively blocks tetrodotoxin-sensitive voltage-gated sodium channels (Nav). Does not affect tetrodotoxin-resistant voltage-gated sodium channels or calcium channels (By similarity).</text>
</comment>
<comment type="subunit">
    <text evidence="1">Monomer.</text>
</comment>
<comment type="subcellular location">
    <subcellularLocation>
        <location evidence="1">Secreted</location>
    </subcellularLocation>
</comment>
<comment type="tissue specificity">
    <text>Expressed by the venom gland.</text>
</comment>
<comment type="domain">
    <text evidence="1">The presence of a 'disulfide through disulfide knot' structurally defines this protein as a knottin.</text>
</comment>
<comment type="similarity">
    <text evidence="3">Belongs to the neurotoxin 10 (Hwtx-1) family. 15 (Hntx-3) subfamily.</text>
</comment>
<organism>
    <name type="scientific">Cyriopagopus hainanus</name>
    <name type="common">Chinese bird spider</name>
    <name type="synonym">Haplopelma hainanum</name>
    <dbReference type="NCBI Taxonomy" id="209901"/>
    <lineage>
        <taxon>Eukaryota</taxon>
        <taxon>Metazoa</taxon>
        <taxon>Ecdysozoa</taxon>
        <taxon>Arthropoda</taxon>
        <taxon>Chelicerata</taxon>
        <taxon>Arachnida</taxon>
        <taxon>Araneae</taxon>
        <taxon>Mygalomorphae</taxon>
        <taxon>Theraphosidae</taxon>
        <taxon>Haplopelma</taxon>
    </lineage>
</organism>
<sequence length="83" mass="9138">MKASMFLALAGLVLLFVVGYASESEEKEFPIELLSKIFAVDVFKGEERGCKGFGDSCTPGKNECCPDHACSNKHKWCKVYLGK</sequence>
<feature type="signal peptide" evidence="2">
    <location>
        <begin position="1"/>
        <end position="21"/>
    </location>
</feature>
<feature type="propeptide" id="PRO_0000400540" evidence="1">
    <location>
        <begin position="22"/>
        <end position="48"/>
    </location>
</feature>
<feature type="peptide" id="PRO_0000400541" description="Mu-theraphotoxin-Hhn2l">
    <location>
        <begin position="49"/>
        <end position="81"/>
    </location>
</feature>
<feature type="modified residue" description="Leucine amide" evidence="1">
    <location>
        <position position="81"/>
    </location>
</feature>
<feature type="disulfide bond" evidence="1">
    <location>
        <begin position="50"/>
        <end position="65"/>
    </location>
</feature>
<feature type="disulfide bond" evidence="1">
    <location>
        <begin position="57"/>
        <end position="70"/>
    </location>
</feature>
<feature type="disulfide bond" evidence="1">
    <location>
        <begin position="64"/>
        <end position="77"/>
    </location>
</feature>
<name>H3D01_CYRHA</name>
<reference key="1">
    <citation type="journal article" date="2010" name="J. Proteome Res.">
        <title>Molecular diversification of peptide toxins from the tarantula Haplopelma hainanum (Ornithoctonus hainana) venom based on transcriptomic, peptidomic, and genomic analyses.</title>
        <authorList>
            <person name="Tang X."/>
            <person name="Zhang Y."/>
            <person name="Hu W."/>
            <person name="Xu D."/>
            <person name="Tao H."/>
            <person name="Yang X."/>
            <person name="Li Y."/>
            <person name="Jiang L."/>
            <person name="Liang S."/>
        </authorList>
    </citation>
    <scope>NUCLEOTIDE SEQUENCE [LARGE SCALE MRNA]</scope>
    <source>
        <tissue>Venom gland</tissue>
    </source>
</reference>
<dbReference type="EMBL" id="GU292864">
    <property type="protein sequence ID" value="ADB56680.1"/>
    <property type="molecule type" value="mRNA"/>
</dbReference>
<dbReference type="SMR" id="D2Y1Y7"/>
<dbReference type="ArachnoServer" id="AS002045">
    <property type="toxin name" value="mu-theraphotoxin-Hhn2l"/>
</dbReference>
<dbReference type="GO" id="GO:0005576">
    <property type="term" value="C:extracellular region"/>
    <property type="evidence" value="ECO:0007669"/>
    <property type="project" value="UniProtKB-SubCell"/>
</dbReference>
<dbReference type="GO" id="GO:0044231">
    <property type="term" value="C:host cell presynaptic membrane"/>
    <property type="evidence" value="ECO:0007669"/>
    <property type="project" value="UniProtKB-KW"/>
</dbReference>
<dbReference type="GO" id="GO:0008200">
    <property type="term" value="F:ion channel inhibitor activity"/>
    <property type="evidence" value="ECO:0007669"/>
    <property type="project" value="InterPro"/>
</dbReference>
<dbReference type="GO" id="GO:0017080">
    <property type="term" value="F:sodium channel regulator activity"/>
    <property type="evidence" value="ECO:0007669"/>
    <property type="project" value="UniProtKB-KW"/>
</dbReference>
<dbReference type="GO" id="GO:0090729">
    <property type="term" value="F:toxin activity"/>
    <property type="evidence" value="ECO:0007669"/>
    <property type="project" value="UniProtKB-KW"/>
</dbReference>
<dbReference type="InterPro" id="IPR011696">
    <property type="entry name" value="Huwentoxin-1"/>
</dbReference>
<dbReference type="InterPro" id="IPR013140">
    <property type="entry name" value="Huwentoxin_CS1"/>
</dbReference>
<dbReference type="Pfam" id="PF07740">
    <property type="entry name" value="Toxin_12"/>
    <property type="match status" value="1"/>
</dbReference>
<dbReference type="SUPFAM" id="SSF57059">
    <property type="entry name" value="omega toxin-like"/>
    <property type="match status" value="1"/>
</dbReference>
<dbReference type="PROSITE" id="PS60021">
    <property type="entry name" value="HWTX_1"/>
    <property type="match status" value="1"/>
</dbReference>
<protein>
    <recommendedName>
        <fullName>Mu-theraphotoxin-Hhn2l</fullName>
        <shortName>Mu-TRTX-Hhn2l</shortName>
    </recommendedName>
    <alternativeName>
        <fullName>Hainantoxin-III-4</fullName>
        <shortName>HNTX-III-4</shortName>
    </alternativeName>
</protein>
<accession>D2Y1Y7</accession>
<keyword id="KW-0027">Amidation</keyword>
<keyword id="KW-1015">Disulfide bond</keyword>
<keyword id="KW-0872">Ion channel impairing toxin</keyword>
<keyword id="KW-0960">Knottin</keyword>
<keyword id="KW-0528">Neurotoxin</keyword>
<keyword id="KW-0638">Presynaptic neurotoxin</keyword>
<keyword id="KW-0964">Secreted</keyword>
<keyword id="KW-0732">Signal</keyword>
<keyword id="KW-0800">Toxin</keyword>
<keyword id="KW-0738">Voltage-gated sodium channel impairing toxin</keyword>